<comment type="function">
    <text evidence="1">Translocates 4-amino-4-deoxy-L-arabinose-phosphoundecaprenol (alpha-L-Ara4N-phosphoundecaprenol) from the cytoplasmic to the periplasmic side of the inner membrane.</text>
</comment>
<comment type="pathway">
    <text evidence="1">Bacterial outer membrane biogenesis; lipopolysaccharide biosynthesis.</text>
</comment>
<comment type="subunit">
    <text evidence="1">Heterodimer of ArnE and ArnF.</text>
</comment>
<comment type="subcellular location">
    <subcellularLocation>
        <location evidence="1">Cell inner membrane</location>
        <topology evidence="1">Multi-pass membrane protein</topology>
    </subcellularLocation>
</comment>
<comment type="similarity">
    <text evidence="1">Belongs to the ArnF family.</text>
</comment>
<keyword id="KW-0997">Cell inner membrane</keyword>
<keyword id="KW-1003">Cell membrane</keyword>
<keyword id="KW-0441">Lipid A biosynthesis</keyword>
<keyword id="KW-0444">Lipid biosynthesis</keyword>
<keyword id="KW-0443">Lipid metabolism</keyword>
<keyword id="KW-0448">Lipopolysaccharide biosynthesis</keyword>
<keyword id="KW-0472">Membrane</keyword>
<keyword id="KW-0812">Transmembrane</keyword>
<keyword id="KW-1133">Transmembrane helix</keyword>
<keyword id="KW-0813">Transport</keyword>
<sequence>MKGYGWGIGSVVLVTVAQLILKWGMMNTPLMSLADINGQFVFNHLPQFIAVICGLAGYALSMLCWFFALRYLPLNRAYPLLSLSYALVYLGAVSLPWFSESATLLKTLGAGFILLGIWLINTKPIAKD</sequence>
<name>ARNF_YERE8</name>
<protein>
    <recommendedName>
        <fullName evidence="1">Probable 4-amino-4-deoxy-L-arabinose-phosphoundecaprenol flippase subunit ArnF</fullName>
        <shortName evidence="1">L-Ara4N-phosphoundecaprenol flippase subunit ArnF</shortName>
    </recommendedName>
    <alternativeName>
        <fullName evidence="1">Undecaprenyl phosphate-aminoarabinose flippase subunit ArnF</fullName>
    </alternativeName>
</protein>
<feature type="chain" id="PRO_1000017388" description="Probable 4-amino-4-deoxy-L-arabinose-phosphoundecaprenol flippase subunit ArnF">
    <location>
        <begin position="1"/>
        <end position="128"/>
    </location>
</feature>
<feature type="topological domain" description="Cytoplasmic" evidence="1">
    <location>
        <begin position="1"/>
        <end position="5"/>
    </location>
</feature>
<feature type="transmembrane region" description="Helical" evidence="1">
    <location>
        <begin position="6"/>
        <end position="26"/>
    </location>
</feature>
<feature type="topological domain" description="Periplasmic" evidence="1">
    <location>
        <begin position="27"/>
        <end position="47"/>
    </location>
</feature>
<feature type="transmembrane region" description="Helical" evidence="1">
    <location>
        <begin position="48"/>
        <end position="68"/>
    </location>
</feature>
<feature type="topological domain" description="Cytoplasmic" evidence="1">
    <location>
        <begin position="69"/>
        <end position="77"/>
    </location>
</feature>
<feature type="transmembrane region" description="Helical" evidence="1">
    <location>
        <begin position="78"/>
        <end position="98"/>
    </location>
</feature>
<feature type="topological domain" description="Periplasmic" evidence="1">
    <location>
        <begin position="99"/>
        <end position="101"/>
    </location>
</feature>
<feature type="transmembrane region" description="Helical" evidence="1">
    <location>
        <begin position="102"/>
        <end position="122"/>
    </location>
</feature>
<feature type="topological domain" description="Cytoplasmic" evidence="1">
    <location>
        <begin position="123"/>
        <end position="128"/>
    </location>
</feature>
<dbReference type="EMBL" id="AM286415">
    <property type="protein sequence ID" value="CAL12256.1"/>
    <property type="molecule type" value="Genomic_DNA"/>
</dbReference>
<dbReference type="RefSeq" id="WP_005169394.1">
    <property type="nucleotide sequence ID" value="NC_008800.1"/>
</dbReference>
<dbReference type="RefSeq" id="YP_001006426.1">
    <property type="nucleotide sequence ID" value="NC_008800.1"/>
</dbReference>
<dbReference type="KEGG" id="yen:YE2186"/>
<dbReference type="PATRIC" id="fig|393305.7.peg.2351"/>
<dbReference type="eggNOG" id="COG2076">
    <property type="taxonomic scope" value="Bacteria"/>
</dbReference>
<dbReference type="HOGENOM" id="CLU_131462_1_0_6"/>
<dbReference type="OrthoDB" id="5592809at2"/>
<dbReference type="UniPathway" id="UPA00030"/>
<dbReference type="Proteomes" id="UP000000642">
    <property type="component" value="Chromosome"/>
</dbReference>
<dbReference type="GO" id="GO:0005886">
    <property type="term" value="C:plasma membrane"/>
    <property type="evidence" value="ECO:0007669"/>
    <property type="project" value="UniProtKB-SubCell"/>
</dbReference>
<dbReference type="GO" id="GO:1901505">
    <property type="term" value="F:carbohydrate derivative transmembrane transporter activity"/>
    <property type="evidence" value="ECO:0007669"/>
    <property type="project" value="InterPro"/>
</dbReference>
<dbReference type="GO" id="GO:0009245">
    <property type="term" value="P:lipid A biosynthetic process"/>
    <property type="evidence" value="ECO:0007669"/>
    <property type="project" value="UniProtKB-UniRule"/>
</dbReference>
<dbReference type="GO" id="GO:0009103">
    <property type="term" value="P:lipopolysaccharide biosynthetic process"/>
    <property type="evidence" value="ECO:0007669"/>
    <property type="project" value="UniProtKB-UniRule"/>
</dbReference>
<dbReference type="Gene3D" id="1.10.3730.20">
    <property type="match status" value="1"/>
</dbReference>
<dbReference type="HAMAP" id="MF_00538">
    <property type="entry name" value="Flippase_ArnF"/>
    <property type="match status" value="1"/>
</dbReference>
<dbReference type="InterPro" id="IPR022832">
    <property type="entry name" value="Flippase_ArnF"/>
</dbReference>
<dbReference type="InterPro" id="IPR000390">
    <property type="entry name" value="Small_drug/metabolite_transptr"/>
</dbReference>
<dbReference type="NCBIfam" id="NF002816">
    <property type="entry name" value="PRK02971.1-2"/>
    <property type="match status" value="1"/>
</dbReference>
<dbReference type="PANTHER" id="PTHR30561:SF9">
    <property type="entry name" value="4-AMINO-4-DEOXY-L-ARABINOSE-PHOSPHOUNDECAPRENOL FLIPPASE SUBUNIT ARNF-RELATED"/>
    <property type="match status" value="1"/>
</dbReference>
<dbReference type="PANTHER" id="PTHR30561">
    <property type="entry name" value="SMR FAMILY PROTON-DEPENDENT DRUG EFFLUX TRANSPORTER SUGE"/>
    <property type="match status" value="1"/>
</dbReference>
<dbReference type="SUPFAM" id="SSF103481">
    <property type="entry name" value="Multidrug resistance efflux transporter EmrE"/>
    <property type="match status" value="1"/>
</dbReference>
<proteinExistence type="inferred from homology"/>
<gene>
    <name evidence="1" type="primary">arnF</name>
    <name type="ordered locus">YE2186</name>
</gene>
<reference key="1">
    <citation type="journal article" date="2006" name="PLoS Genet.">
        <title>The complete genome sequence and comparative genome analysis of the high pathogenicity Yersinia enterocolitica strain 8081.</title>
        <authorList>
            <person name="Thomson N.R."/>
            <person name="Howard S."/>
            <person name="Wren B.W."/>
            <person name="Holden M.T.G."/>
            <person name="Crossman L."/>
            <person name="Challis G.L."/>
            <person name="Churcher C."/>
            <person name="Mungall K."/>
            <person name="Brooks K."/>
            <person name="Chillingworth T."/>
            <person name="Feltwell T."/>
            <person name="Abdellah Z."/>
            <person name="Hauser H."/>
            <person name="Jagels K."/>
            <person name="Maddison M."/>
            <person name="Moule S."/>
            <person name="Sanders M."/>
            <person name="Whitehead S."/>
            <person name="Quail M.A."/>
            <person name="Dougan G."/>
            <person name="Parkhill J."/>
            <person name="Prentice M.B."/>
        </authorList>
    </citation>
    <scope>NUCLEOTIDE SEQUENCE [LARGE SCALE GENOMIC DNA]</scope>
    <source>
        <strain>NCTC 13174 / 8081</strain>
    </source>
</reference>
<accession>A1JPL6</accession>
<organism>
    <name type="scientific">Yersinia enterocolitica serotype O:8 / biotype 1B (strain NCTC 13174 / 8081)</name>
    <dbReference type="NCBI Taxonomy" id="393305"/>
    <lineage>
        <taxon>Bacteria</taxon>
        <taxon>Pseudomonadati</taxon>
        <taxon>Pseudomonadota</taxon>
        <taxon>Gammaproteobacteria</taxon>
        <taxon>Enterobacterales</taxon>
        <taxon>Yersiniaceae</taxon>
        <taxon>Yersinia</taxon>
    </lineage>
</organism>
<evidence type="ECO:0000255" key="1">
    <source>
        <dbReference type="HAMAP-Rule" id="MF_00538"/>
    </source>
</evidence>